<proteinExistence type="evidence at protein level"/>
<keyword id="KW-0028">Amino-acid biosynthesis</keyword>
<keyword id="KW-0032">Aminotransferase</keyword>
<keyword id="KW-0368">Histidine biosynthesis</keyword>
<keyword id="KW-0663">Pyridoxal phosphate</keyword>
<keyword id="KW-0808">Transferase</keyword>
<accession>P67725</accession>
<accession>Q99VP9</accession>
<feature type="chain" id="PRO_0000153456" description="Histidinol-phosphate aminotransferase">
    <location>
        <begin position="1"/>
        <end position="352"/>
    </location>
</feature>
<feature type="modified residue" description="N6-(pyridoxal phosphate)lysine" evidence="1">
    <location>
        <position position="221"/>
    </location>
</feature>
<reference key="1">
    <citation type="journal article" date="2001" name="Lancet">
        <title>Whole genome sequencing of meticillin-resistant Staphylococcus aureus.</title>
        <authorList>
            <person name="Kuroda M."/>
            <person name="Ohta T."/>
            <person name="Uchiyama I."/>
            <person name="Baba T."/>
            <person name="Yuzawa H."/>
            <person name="Kobayashi I."/>
            <person name="Cui L."/>
            <person name="Oguchi A."/>
            <person name="Aoki K."/>
            <person name="Nagai Y."/>
            <person name="Lian J.-Q."/>
            <person name="Ito T."/>
            <person name="Kanamori M."/>
            <person name="Matsumaru H."/>
            <person name="Maruyama A."/>
            <person name="Murakami H."/>
            <person name="Hosoyama A."/>
            <person name="Mizutani-Ui Y."/>
            <person name="Takahashi N.K."/>
            <person name="Sawano T."/>
            <person name="Inoue R."/>
            <person name="Kaito C."/>
            <person name="Sekimizu K."/>
            <person name="Hirakawa H."/>
            <person name="Kuhara S."/>
            <person name="Goto S."/>
            <person name="Yabuzaki J."/>
            <person name="Kanehisa M."/>
            <person name="Yamashita A."/>
            <person name="Oshima K."/>
            <person name="Furuya K."/>
            <person name="Yoshino C."/>
            <person name="Shiba T."/>
            <person name="Hattori M."/>
            <person name="Ogasawara N."/>
            <person name="Hayashi H."/>
            <person name="Hiramatsu K."/>
        </authorList>
    </citation>
    <scope>NUCLEOTIDE SEQUENCE [LARGE SCALE GENOMIC DNA]</scope>
    <source>
        <strain>N315</strain>
    </source>
</reference>
<reference key="2">
    <citation type="submission" date="2007-10" db="UniProtKB">
        <title>Shotgun proteomic analysis of total and membrane protein extracts of S. aureus strain N315.</title>
        <authorList>
            <person name="Vaezzadeh A.R."/>
            <person name="Deshusses J."/>
            <person name="Lescuyer P."/>
            <person name="Hochstrasser D.F."/>
        </authorList>
    </citation>
    <scope>IDENTIFICATION BY MASS SPECTROMETRY [LARGE SCALE ANALYSIS]</scope>
    <source>
        <strain>N315</strain>
    </source>
</reference>
<evidence type="ECO:0000255" key="1">
    <source>
        <dbReference type="HAMAP-Rule" id="MF_01023"/>
    </source>
</evidence>
<protein>
    <recommendedName>
        <fullName evidence="1">Histidinol-phosphate aminotransferase</fullName>
        <ecNumber evidence="1">2.6.1.9</ecNumber>
    </recommendedName>
    <alternativeName>
        <fullName evidence="1">Imidazole acetol-phosphate transaminase</fullName>
    </alternativeName>
</protein>
<gene>
    <name evidence="1" type="primary">hisC</name>
    <name type="ordered locus">SA0679</name>
</gene>
<dbReference type="EC" id="2.6.1.9" evidence="1"/>
<dbReference type="EMBL" id="BA000018">
    <property type="protein sequence ID" value="BAB41912.1"/>
    <property type="molecule type" value="Genomic_DNA"/>
</dbReference>
<dbReference type="PIR" id="E89844">
    <property type="entry name" value="E89844"/>
</dbReference>
<dbReference type="RefSeq" id="WP_000663030.1">
    <property type="nucleotide sequence ID" value="NC_002745.2"/>
</dbReference>
<dbReference type="SMR" id="P67725"/>
<dbReference type="EnsemblBacteria" id="BAB41912">
    <property type="protein sequence ID" value="BAB41912"/>
    <property type="gene ID" value="BAB41912"/>
</dbReference>
<dbReference type="KEGG" id="sau:SA0679"/>
<dbReference type="HOGENOM" id="CLU_017584_3_3_9"/>
<dbReference type="UniPathway" id="UPA00031">
    <property type="reaction ID" value="UER00012"/>
</dbReference>
<dbReference type="GO" id="GO:0004400">
    <property type="term" value="F:histidinol-phosphate transaminase activity"/>
    <property type="evidence" value="ECO:0007669"/>
    <property type="project" value="UniProtKB-UniRule"/>
</dbReference>
<dbReference type="GO" id="GO:0030170">
    <property type="term" value="F:pyridoxal phosphate binding"/>
    <property type="evidence" value="ECO:0007669"/>
    <property type="project" value="InterPro"/>
</dbReference>
<dbReference type="GO" id="GO:0000105">
    <property type="term" value="P:L-histidine biosynthetic process"/>
    <property type="evidence" value="ECO:0007669"/>
    <property type="project" value="UniProtKB-UniRule"/>
</dbReference>
<dbReference type="CDD" id="cd00609">
    <property type="entry name" value="AAT_like"/>
    <property type="match status" value="1"/>
</dbReference>
<dbReference type="Gene3D" id="3.90.1150.10">
    <property type="entry name" value="Aspartate Aminotransferase, domain 1"/>
    <property type="match status" value="1"/>
</dbReference>
<dbReference type="Gene3D" id="3.40.640.10">
    <property type="entry name" value="Type I PLP-dependent aspartate aminotransferase-like (Major domain)"/>
    <property type="match status" value="1"/>
</dbReference>
<dbReference type="HAMAP" id="MF_01023">
    <property type="entry name" value="HisC_aminotrans_2"/>
    <property type="match status" value="1"/>
</dbReference>
<dbReference type="InterPro" id="IPR001917">
    <property type="entry name" value="Aminotrans_II_pyridoxalP_BS"/>
</dbReference>
<dbReference type="InterPro" id="IPR004839">
    <property type="entry name" value="Aminotransferase_I/II_large"/>
</dbReference>
<dbReference type="InterPro" id="IPR005861">
    <property type="entry name" value="HisP_aminotrans"/>
</dbReference>
<dbReference type="InterPro" id="IPR050106">
    <property type="entry name" value="HistidinolP_aminotransfase"/>
</dbReference>
<dbReference type="InterPro" id="IPR015424">
    <property type="entry name" value="PyrdxlP-dep_Trfase"/>
</dbReference>
<dbReference type="InterPro" id="IPR015421">
    <property type="entry name" value="PyrdxlP-dep_Trfase_major"/>
</dbReference>
<dbReference type="InterPro" id="IPR015422">
    <property type="entry name" value="PyrdxlP-dep_Trfase_small"/>
</dbReference>
<dbReference type="NCBIfam" id="TIGR01141">
    <property type="entry name" value="hisC"/>
    <property type="match status" value="1"/>
</dbReference>
<dbReference type="PANTHER" id="PTHR43643:SF3">
    <property type="entry name" value="HISTIDINOL-PHOSPHATE AMINOTRANSFERASE"/>
    <property type="match status" value="1"/>
</dbReference>
<dbReference type="PANTHER" id="PTHR43643">
    <property type="entry name" value="HISTIDINOL-PHOSPHATE AMINOTRANSFERASE 2"/>
    <property type="match status" value="1"/>
</dbReference>
<dbReference type="Pfam" id="PF00155">
    <property type="entry name" value="Aminotran_1_2"/>
    <property type="match status" value="1"/>
</dbReference>
<dbReference type="SUPFAM" id="SSF53383">
    <property type="entry name" value="PLP-dependent transferases"/>
    <property type="match status" value="1"/>
</dbReference>
<dbReference type="PROSITE" id="PS00599">
    <property type="entry name" value="AA_TRANSFER_CLASS_2"/>
    <property type="match status" value="1"/>
</dbReference>
<organism>
    <name type="scientific">Staphylococcus aureus (strain N315)</name>
    <dbReference type="NCBI Taxonomy" id="158879"/>
    <lineage>
        <taxon>Bacteria</taxon>
        <taxon>Bacillati</taxon>
        <taxon>Bacillota</taxon>
        <taxon>Bacilli</taxon>
        <taxon>Bacillales</taxon>
        <taxon>Staphylococcaceae</taxon>
        <taxon>Staphylococcus</taxon>
    </lineage>
</organism>
<comment type="catalytic activity">
    <reaction evidence="1">
        <text>L-histidinol phosphate + 2-oxoglutarate = 3-(imidazol-4-yl)-2-oxopropyl phosphate + L-glutamate</text>
        <dbReference type="Rhea" id="RHEA:23744"/>
        <dbReference type="ChEBI" id="CHEBI:16810"/>
        <dbReference type="ChEBI" id="CHEBI:29985"/>
        <dbReference type="ChEBI" id="CHEBI:57766"/>
        <dbReference type="ChEBI" id="CHEBI:57980"/>
        <dbReference type="EC" id="2.6.1.9"/>
    </reaction>
</comment>
<comment type="cofactor">
    <cofactor evidence="1">
        <name>pyridoxal 5'-phosphate</name>
        <dbReference type="ChEBI" id="CHEBI:597326"/>
    </cofactor>
</comment>
<comment type="pathway">
    <text evidence="1">Amino-acid biosynthesis; L-histidine biosynthesis; L-histidine from 5-phospho-alpha-D-ribose 1-diphosphate: step 7/9.</text>
</comment>
<comment type="subunit">
    <text evidence="1">Homodimer.</text>
</comment>
<comment type="similarity">
    <text evidence="1">Belongs to the class-II pyridoxal-phosphate-dependent aminotransferase family. Histidinol-phosphate aminotransferase subfamily.</text>
</comment>
<sequence>MKEQLNQLSAYQPGLSPRALKEKYGIEGDLYKLASNENLYGPSPKVKEAISAHLDELYYYPETGSPTLKAAISKHLNVDQSRILFGAGLDEVILMISRAVLTPGDTIVTSEATFGQYYHNAIVESANVIQVPLKDGGFDLEGILKEVNEDTSLVWLCNPNNPTGTYFNHESLDSFLSQVPPHVPVIIDEAYFEFVTAEDYPDTLALQQKYDNAFLLRTFSKAYGLAGLRVGYVVASEHAIEKWNIIRPPFNVTRISEYAAVAALEDQQYLKEVTHKNSVERERFYQLPQSEYFLPSQTNFIFVKTKRVNELYEALLNVGCITRPFPTGVRITIGFKEQNDKMLEVLSNFKYE</sequence>
<name>HIS8_STAAN</name>